<feature type="chain" id="PRO_0000224941" description="Large ribosomal subunit protein bL21">
    <location>
        <begin position="1"/>
        <end position="102"/>
    </location>
</feature>
<keyword id="KW-0687">Ribonucleoprotein</keyword>
<keyword id="KW-0689">Ribosomal protein</keyword>
<keyword id="KW-0694">RNA-binding</keyword>
<keyword id="KW-0699">rRNA-binding</keyword>
<proteinExistence type="inferred from homology"/>
<protein>
    <recommendedName>
        <fullName evidence="1">Large ribosomal subunit protein bL21</fullName>
    </recommendedName>
    <alternativeName>
        <fullName evidence="2">50S ribosomal protein L21</fullName>
    </alternativeName>
</protein>
<gene>
    <name evidence="1" type="primary">rplU</name>
    <name type="ordered locus">SH1273</name>
</gene>
<comment type="function">
    <text evidence="1">This protein binds to 23S rRNA in the presence of protein L20.</text>
</comment>
<comment type="subunit">
    <text evidence="1">Part of the 50S ribosomal subunit. Contacts protein L20.</text>
</comment>
<comment type="similarity">
    <text evidence="1">Belongs to the bacterial ribosomal protein bL21 family.</text>
</comment>
<name>RL21_STAHJ</name>
<organism>
    <name type="scientific">Staphylococcus haemolyticus (strain JCSC1435)</name>
    <dbReference type="NCBI Taxonomy" id="279808"/>
    <lineage>
        <taxon>Bacteria</taxon>
        <taxon>Bacillati</taxon>
        <taxon>Bacillota</taxon>
        <taxon>Bacilli</taxon>
        <taxon>Bacillales</taxon>
        <taxon>Staphylococcaceae</taxon>
        <taxon>Staphylococcus</taxon>
    </lineage>
</organism>
<sequence>MFAIIETGGKQIKVEEGQEIFVEKLDVNEGDSFTFDKVLFVGGDSVKVGAPTVEGATVTATVNKQGRGKKITVFTYKRRKDSKRKKGHRQPYTKLTIDKIKA</sequence>
<dbReference type="EMBL" id="AP006716">
    <property type="protein sequence ID" value="BAE04582.1"/>
    <property type="molecule type" value="Genomic_DNA"/>
</dbReference>
<dbReference type="RefSeq" id="WP_011275571.1">
    <property type="nucleotide sequence ID" value="NC_007168.1"/>
</dbReference>
<dbReference type="SMR" id="Q4L6Z3"/>
<dbReference type="GeneID" id="93780676"/>
<dbReference type="KEGG" id="sha:SH1273"/>
<dbReference type="eggNOG" id="COG0261">
    <property type="taxonomic scope" value="Bacteria"/>
</dbReference>
<dbReference type="HOGENOM" id="CLU_061463_3_2_9"/>
<dbReference type="OrthoDB" id="9813334at2"/>
<dbReference type="Proteomes" id="UP000000543">
    <property type="component" value="Chromosome"/>
</dbReference>
<dbReference type="GO" id="GO:0005737">
    <property type="term" value="C:cytoplasm"/>
    <property type="evidence" value="ECO:0007669"/>
    <property type="project" value="UniProtKB-ARBA"/>
</dbReference>
<dbReference type="GO" id="GO:1990904">
    <property type="term" value="C:ribonucleoprotein complex"/>
    <property type="evidence" value="ECO:0007669"/>
    <property type="project" value="UniProtKB-KW"/>
</dbReference>
<dbReference type="GO" id="GO:0005840">
    <property type="term" value="C:ribosome"/>
    <property type="evidence" value="ECO:0007669"/>
    <property type="project" value="UniProtKB-KW"/>
</dbReference>
<dbReference type="GO" id="GO:0019843">
    <property type="term" value="F:rRNA binding"/>
    <property type="evidence" value="ECO:0007669"/>
    <property type="project" value="UniProtKB-UniRule"/>
</dbReference>
<dbReference type="GO" id="GO:0003735">
    <property type="term" value="F:structural constituent of ribosome"/>
    <property type="evidence" value="ECO:0007669"/>
    <property type="project" value="InterPro"/>
</dbReference>
<dbReference type="GO" id="GO:0006412">
    <property type="term" value="P:translation"/>
    <property type="evidence" value="ECO:0007669"/>
    <property type="project" value="UniProtKB-UniRule"/>
</dbReference>
<dbReference type="HAMAP" id="MF_01363">
    <property type="entry name" value="Ribosomal_bL21"/>
    <property type="match status" value="1"/>
</dbReference>
<dbReference type="InterPro" id="IPR028909">
    <property type="entry name" value="bL21-like"/>
</dbReference>
<dbReference type="InterPro" id="IPR036164">
    <property type="entry name" value="bL21-like_sf"/>
</dbReference>
<dbReference type="InterPro" id="IPR001787">
    <property type="entry name" value="Ribosomal_bL21"/>
</dbReference>
<dbReference type="NCBIfam" id="TIGR00061">
    <property type="entry name" value="L21"/>
    <property type="match status" value="1"/>
</dbReference>
<dbReference type="PANTHER" id="PTHR21349">
    <property type="entry name" value="50S RIBOSOMAL PROTEIN L21"/>
    <property type="match status" value="1"/>
</dbReference>
<dbReference type="PANTHER" id="PTHR21349:SF0">
    <property type="entry name" value="LARGE RIBOSOMAL SUBUNIT PROTEIN BL21M"/>
    <property type="match status" value="1"/>
</dbReference>
<dbReference type="Pfam" id="PF00829">
    <property type="entry name" value="Ribosomal_L21p"/>
    <property type="match status" value="1"/>
</dbReference>
<dbReference type="SUPFAM" id="SSF141091">
    <property type="entry name" value="L21p-like"/>
    <property type="match status" value="1"/>
</dbReference>
<reference key="1">
    <citation type="journal article" date="2005" name="J. Bacteriol.">
        <title>Whole-genome sequencing of Staphylococcus haemolyticus uncovers the extreme plasticity of its genome and the evolution of human-colonizing staphylococcal species.</title>
        <authorList>
            <person name="Takeuchi F."/>
            <person name="Watanabe S."/>
            <person name="Baba T."/>
            <person name="Yuzawa H."/>
            <person name="Ito T."/>
            <person name="Morimoto Y."/>
            <person name="Kuroda M."/>
            <person name="Cui L."/>
            <person name="Takahashi M."/>
            <person name="Ankai A."/>
            <person name="Baba S."/>
            <person name="Fukui S."/>
            <person name="Lee J.C."/>
            <person name="Hiramatsu K."/>
        </authorList>
    </citation>
    <scope>NUCLEOTIDE SEQUENCE [LARGE SCALE GENOMIC DNA]</scope>
    <source>
        <strain>JCSC1435</strain>
    </source>
</reference>
<accession>Q4L6Z3</accession>
<evidence type="ECO:0000255" key="1">
    <source>
        <dbReference type="HAMAP-Rule" id="MF_01363"/>
    </source>
</evidence>
<evidence type="ECO:0000305" key="2"/>